<proteinExistence type="evidence at protein level"/>
<accession>A0A0F7VN41</accession>
<reference key="1">
    <citation type="submission" date="2015-02" db="EMBL/GenBank/DDBJ databases">
        <authorList>
            <person name="Gomez-Escribano P.J."/>
        </authorList>
    </citation>
    <scope>NUCLEOTIDE SEQUENCE [LARGE SCALE GENOMIC DNA]</scope>
    <source>
        <strain>DSM 42122 / NRRL B-24963 / C34</strain>
    </source>
</reference>
<reference key="2">
    <citation type="journal article" date="2024" name="Beilstein J. Org. Chem.">
        <title>A myo-inositol dehydrogenase involved in aminocyclitol biosynthesis of hygromycin A.</title>
        <authorList>
            <person name="Akintubosun M.O."/>
            <person name="Higgins M.A."/>
        </authorList>
    </citation>
    <scope>FUNCTION</scope>
    <scope>CATALYTIC ACTIVITY</scope>
    <scope>BIOPHYSICOCHEMICAL PROPERTIES</scope>
    <source>
        <strain>DSM 42122 / NRRL B-24963 / C34</strain>
    </source>
</reference>
<comment type="function">
    <text evidence="1">Dehydrogenase involved in the biosynthesis of the aminocyclitol moiety of hygromycin A, a broad-spectrum antibiotic (PubMed:38505238). Catalyzes the NAD(+)-dependent oxidation of myo-inositol to myo-inosose-5 (neo-inosose) (PubMed:38505238). Shows reduced activity with scyllo-inositol, minimal activity with L-chiro-inositol and no activity with D-glucose, D-chiro-inositol, epi-inositol, muco-inositol and allo-inositol (PubMed:38505238). Is specific for NAD(+) and cannot use NADP(+) (PubMed:38505238).</text>
</comment>
<comment type="catalytic activity">
    <reaction evidence="1">
        <text>myo-inositol + NAD(+) = myo-inosose-5 + NADH + H(+)</text>
        <dbReference type="Rhea" id="RHEA:79419"/>
        <dbReference type="ChEBI" id="CHEBI:15378"/>
        <dbReference type="ChEBI" id="CHEBI:17268"/>
        <dbReference type="ChEBI" id="CHEBI:57540"/>
        <dbReference type="ChEBI" id="CHEBI:57945"/>
        <dbReference type="ChEBI" id="CHEBI:81197"/>
    </reaction>
    <physiologicalReaction direction="left-to-right" evidence="1">
        <dbReference type="Rhea" id="RHEA:79420"/>
    </physiologicalReaction>
</comment>
<comment type="biophysicochemical properties">
    <kinetics>
        <KM evidence="1">9 mM for myo-inositol</KM>
        <KM evidence="1">20.3 mM for scyllo-inositol</KM>
        <KM evidence="1">4.2 mM for NAD(+)</KM>
        <text evidence="1">kcat is 3.3 sec(-1) with myo-inositol as substrate. kcat is 0.60 sec(-1) with scyllo-inositol as substrate. kcat is 1.9 sec(-1) with NAD(+) as substrate.</text>
    </kinetics>
    <phDependence>
        <text evidence="1">Optimum pH is 10.5-11.</text>
    </phDependence>
</comment>
<comment type="pathway">
    <text evidence="4">Antibiotic biosynthesis.</text>
</comment>
<comment type="similarity">
    <text evidence="3">Belongs to the Gfo/Idh/MocA family.</text>
</comment>
<feature type="chain" id="PRO_0000460600" description="Myo-inositol dehydrogenase Hyg17">
    <location>
        <begin position="1"/>
        <end position="325"/>
    </location>
</feature>
<keyword id="KW-0045">Antibiotic biosynthesis</keyword>
<keyword id="KW-0520">NAD</keyword>
<keyword id="KW-0560">Oxidoreductase</keyword>
<sequence>MTVAVVGCGRIGAMYAHHLDALGPHHLVCVDAEPARAEKLAQETASATVAASVGELVARGCDAALVTAGTTAHPELVEALVEAGVPTLCEKPLAIDLPRTEALGTLAERHGVPLWVGFQRHFDPGFADLRARTVAGRLGRVQLLRLVSHDVSPPPVDRLRQSGTVFTDLMLHDFDMVRWLTGREIVQVVADGAALSCPELADIGDFDTVTAMVRLDDDTLGVLSAGRWQPLGYDVRAEVLGERGNLENGPTGANAPGAGGEAPRFRGYWDRFATAYRAQVRAFLTMAAGGPADPAAGTWRDSHDALRCALAAERSATSGSVPVAP</sequence>
<gene>
    <name evidence="2" type="primary">hyg17</name>
    <name evidence="5" type="ORF">sle_01710</name>
</gene>
<protein>
    <recommendedName>
        <fullName evidence="2">Myo-inositol dehydrogenase Hyg17</fullName>
        <ecNumber evidence="1">1.1.1.-</ecNumber>
    </recommendedName>
</protein>
<organism>
    <name type="scientific">Streptomyces leeuwenhoekii</name>
    <dbReference type="NCBI Taxonomy" id="1437453"/>
    <lineage>
        <taxon>Bacteria</taxon>
        <taxon>Bacillati</taxon>
        <taxon>Actinomycetota</taxon>
        <taxon>Actinomycetes</taxon>
        <taxon>Kitasatosporales</taxon>
        <taxon>Streptomycetaceae</taxon>
        <taxon>Streptomyces</taxon>
    </lineage>
</organism>
<evidence type="ECO:0000269" key="1">
    <source>
    </source>
</evidence>
<evidence type="ECO:0000303" key="2">
    <source>
    </source>
</evidence>
<evidence type="ECO:0000305" key="3"/>
<evidence type="ECO:0000305" key="4">
    <source>
    </source>
</evidence>
<evidence type="ECO:0000312" key="5">
    <source>
        <dbReference type="EMBL" id="CQR59633.1"/>
    </source>
</evidence>
<name>HYG17_STRLW</name>
<dbReference type="EC" id="1.1.1.-" evidence="1"/>
<dbReference type="EMBL" id="LN831790">
    <property type="protein sequence ID" value="CQR59633.1"/>
    <property type="molecule type" value="Genomic_DNA"/>
</dbReference>
<dbReference type="SMR" id="A0A0F7VN41"/>
<dbReference type="KEGG" id="sle:sle_01710"/>
<dbReference type="Proteomes" id="UP000035016">
    <property type="component" value="Chromosome Chromosome"/>
</dbReference>
<dbReference type="GO" id="GO:0000166">
    <property type="term" value="F:nucleotide binding"/>
    <property type="evidence" value="ECO:0007669"/>
    <property type="project" value="InterPro"/>
</dbReference>
<dbReference type="GO" id="GO:0016491">
    <property type="term" value="F:oxidoreductase activity"/>
    <property type="evidence" value="ECO:0007669"/>
    <property type="project" value="UniProtKB-KW"/>
</dbReference>
<dbReference type="GO" id="GO:0017000">
    <property type="term" value="P:antibiotic biosynthetic process"/>
    <property type="evidence" value="ECO:0007669"/>
    <property type="project" value="UniProtKB-KW"/>
</dbReference>
<dbReference type="Gene3D" id="3.30.360.10">
    <property type="entry name" value="Dihydrodipicolinate Reductase, domain 2"/>
    <property type="match status" value="1"/>
</dbReference>
<dbReference type="Gene3D" id="3.40.50.720">
    <property type="entry name" value="NAD(P)-binding Rossmann-like Domain"/>
    <property type="match status" value="1"/>
</dbReference>
<dbReference type="InterPro" id="IPR000683">
    <property type="entry name" value="Gfo/Idh/MocA-like_OxRdtase_N"/>
</dbReference>
<dbReference type="InterPro" id="IPR055170">
    <property type="entry name" value="GFO_IDH_MocA-like_dom"/>
</dbReference>
<dbReference type="InterPro" id="IPR036291">
    <property type="entry name" value="NAD(P)-bd_dom_sf"/>
</dbReference>
<dbReference type="PANTHER" id="PTHR42840:SF3">
    <property type="entry name" value="BINDING ROSSMANN FOLD OXIDOREDUCTASE, PUTATIVE (AFU_ORTHOLOGUE AFUA_2G10240)-RELATED"/>
    <property type="match status" value="1"/>
</dbReference>
<dbReference type="PANTHER" id="PTHR42840">
    <property type="entry name" value="NAD(P)-BINDING ROSSMANN-FOLD SUPERFAMILY PROTEIN-RELATED"/>
    <property type="match status" value="1"/>
</dbReference>
<dbReference type="Pfam" id="PF01408">
    <property type="entry name" value="GFO_IDH_MocA"/>
    <property type="match status" value="1"/>
</dbReference>
<dbReference type="Pfam" id="PF22725">
    <property type="entry name" value="GFO_IDH_MocA_C3"/>
    <property type="match status" value="1"/>
</dbReference>
<dbReference type="SUPFAM" id="SSF55347">
    <property type="entry name" value="Glyceraldehyde-3-phosphate dehydrogenase-like, C-terminal domain"/>
    <property type="match status" value="1"/>
</dbReference>
<dbReference type="SUPFAM" id="SSF51735">
    <property type="entry name" value="NAD(P)-binding Rossmann-fold domains"/>
    <property type="match status" value="1"/>
</dbReference>